<name>GLRX4_ECO57</name>
<gene>
    <name type="primary">grxD</name>
    <name type="synonym">ydhD</name>
    <name type="ordered locus">Z2676</name>
    <name type="ordered locus">ECs2363</name>
</gene>
<protein>
    <recommendedName>
        <fullName>Glutaredoxin 4</fullName>
        <shortName>Grx4</shortName>
    </recommendedName>
    <alternativeName>
        <fullName>Monothiol glutaredoxin</fullName>
    </alternativeName>
</protein>
<comment type="function">
    <text evidence="1">Monothiol glutaredoxin involved in the biogenesis of iron-sulfur clusters.</text>
</comment>
<comment type="subunit">
    <text evidence="1">Homodimer.</text>
</comment>
<comment type="subcellular location">
    <subcellularLocation>
        <location evidence="1">Cytoplasm</location>
    </subcellularLocation>
</comment>
<comment type="similarity">
    <text evidence="3">Belongs to the glutaredoxin family. Monothiol subfamily.</text>
</comment>
<organism>
    <name type="scientific">Escherichia coli O157:H7</name>
    <dbReference type="NCBI Taxonomy" id="83334"/>
    <lineage>
        <taxon>Bacteria</taxon>
        <taxon>Pseudomonadati</taxon>
        <taxon>Pseudomonadota</taxon>
        <taxon>Gammaproteobacteria</taxon>
        <taxon>Enterobacterales</taxon>
        <taxon>Enterobacteriaceae</taxon>
        <taxon>Escherichia</taxon>
    </lineage>
</organism>
<dbReference type="EMBL" id="AE005174">
    <property type="protein sequence ID" value="AAG56643.1"/>
    <property type="molecule type" value="Genomic_DNA"/>
</dbReference>
<dbReference type="EMBL" id="BA000007">
    <property type="protein sequence ID" value="BAB35786.1"/>
    <property type="molecule type" value="Genomic_DNA"/>
</dbReference>
<dbReference type="PIR" id="C90924">
    <property type="entry name" value="C90924"/>
</dbReference>
<dbReference type="PIR" id="G85772">
    <property type="entry name" value="G85772"/>
</dbReference>
<dbReference type="RefSeq" id="NP_310390.1">
    <property type="nucleotide sequence ID" value="NC_002695.1"/>
</dbReference>
<dbReference type="RefSeq" id="WP_000108172.1">
    <property type="nucleotide sequence ID" value="NZ_VOAI01000007.1"/>
</dbReference>
<dbReference type="SMR" id="P0AC71"/>
<dbReference type="STRING" id="155864.Z2676"/>
<dbReference type="GeneID" id="89516419"/>
<dbReference type="GeneID" id="912690"/>
<dbReference type="KEGG" id="ece:Z2676"/>
<dbReference type="KEGG" id="ecs:ECs_2363"/>
<dbReference type="PATRIC" id="fig|386585.9.peg.2472"/>
<dbReference type="eggNOG" id="COG0278">
    <property type="taxonomic scope" value="Bacteria"/>
</dbReference>
<dbReference type="HOGENOM" id="CLU_026126_2_1_6"/>
<dbReference type="OMA" id="TKLMPQC"/>
<dbReference type="Proteomes" id="UP000000558">
    <property type="component" value="Chromosome"/>
</dbReference>
<dbReference type="Proteomes" id="UP000002519">
    <property type="component" value="Chromosome"/>
</dbReference>
<dbReference type="GO" id="GO:0005737">
    <property type="term" value="C:cytoplasm"/>
    <property type="evidence" value="ECO:0007669"/>
    <property type="project" value="UniProtKB-SubCell"/>
</dbReference>
<dbReference type="GO" id="GO:0051537">
    <property type="term" value="F:2 iron, 2 sulfur cluster binding"/>
    <property type="evidence" value="ECO:0007669"/>
    <property type="project" value="UniProtKB-KW"/>
</dbReference>
<dbReference type="GO" id="GO:0015036">
    <property type="term" value="F:disulfide oxidoreductase activity"/>
    <property type="evidence" value="ECO:0007669"/>
    <property type="project" value="InterPro"/>
</dbReference>
<dbReference type="GO" id="GO:0046872">
    <property type="term" value="F:metal ion binding"/>
    <property type="evidence" value="ECO:0007669"/>
    <property type="project" value="UniProtKB-KW"/>
</dbReference>
<dbReference type="CDD" id="cd03028">
    <property type="entry name" value="GRX_PICOT_like"/>
    <property type="match status" value="1"/>
</dbReference>
<dbReference type="FunFam" id="3.40.30.10:FF:000006">
    <property type="entry name" value="Glutaredoxin"/>
    <property type="match status" value="1"/>
</dbReference>
<dbReference type="Gene3D" id="3.40.30.10">
    <property type="entry name" value="Glutaredoxin"/>
    <property type="match status" value="1"/>
</dbReference>
<dbReference type="InterPro" id="IPR002109">
    <property type="entry name" value="Glutaredoxin"/>
</dbReference>
<dbReference type="InterPro" id="IPR033658">
    <property type="entry name" value="GRX_PICOT-like"/>
</dbReference>
<dbReference type="InterPro" id="IPR014434">
    <property type="entry name" value="Monothiol_GRX"/>
</dbReference>
<dbReference type="InterPro" id="IPR004480">
    <property type="entry name" value="Monothiol_GRX-rel"/>
</dbReference>
<dbReference type="InterPro" id="IPR036249">
    <property type="entry name" value="Thioredoxin-like_sf"/>
</dbReference>
<dbReference type="NCBIfam" id="TIGR00365">
    <property type="entry name" value="Grx4 family monothiol glutaredoxin"/>
    <property type="match status" value="1"/>
</dbReference>
<dbReference type="NCBIfam" id="NF008086">
    <property type="entry name" value="PRK10824.1"/>
    <property type="match status" value="1"/>
</dbReference>
<dbReference type="PANTHER" id="PTHR10293">
    <property type="entry name" value="GLUTAREDOXIN FAMILY MEMBER"/>
    <property type="match status" value="1"/>
</dbReference>
<dbReference type="PANTHER" id="PTHR10293:SF72">
    <property type="entry name" value="MONOTHIOL GLUTAREDOXIN-S14, CHLOROPLASTIC"/>
    <property type="match status" value="1"/>
</dbReference>
<dbReference type="Pfam" id="PF00462">
    <property type="entry name" value="Glutaredoxin"/>
    <property type="match status" value="1"/>
</dbReference>
<dbReference type="PIRSF" id="PIRSF005894">
    <property type="entry name" value="Monothiol_GRX"/>
    <property type="match status" value="1"/>
</dbReference>
<dbReference type="SUPFAM" id="SSF52833">
    <property type="entry name" value="Thioredoxin-like"/>
    <property type="match status" value="1"/>
</dbReference>
<dbReference type="PROSITE" id="PS51354">
    <property type="entry name" value="GLUTAREDOXIN_2"/>
    <property type="match status" value="1"/>
</dbReference>
<evidence type="ECO:0000250" key="1"/>
<evidence type="ECO:0000255" key="2">
    <source>
        <dbReference type="PROSITE-ProRule" id="PRU00686"/>
    </source>
</evidence>
<evidence type="ECO:0000305" key="3"/>
<sequence>MSTTIEKIQRQIAENPILLYMKGSPKLPSCGFSAQAVQALAACGERFAYVDILQNPDIRAELPKYANWPTFPQLWVDGELVGGCDIVIEMYQRGELQQLIKETAAKYKSEEPDAE</sequence>
<proteinExistence type="inferred from homology"/>
<feature type="chain" id="PRO_0000102258" description="Glutaredoxin 4">
    <location>
        <begin position="1"/>
        <end position="115"/>
    </location>
</feature>
<feature type="domain" description="Glutaredoxin" evidence="2">
    <location>
        <begin position="5"/>
        <end position="107"/>
    </location>
</feature>
<feature type="binding site" evidence="1">
    <location>
        <position position="22"/>
    </location>
    <ligand>
        <name>glutathione</name>
        <dbReference type="ChEBI" id="CHEBI:57925"/>
    </ligand>
</feature>
<feature type="binding site" evidence="1">
    <location>
        <position position="30"/>
    </location>
    <ligand>
        <name>[2Fe-2S] cluster</name>
        <dbReference type="ChEBI" id="CHEBI:190135"/>
        <note>ligand shared between dimeric partners</note>
    </ligand>
</feature>
<feature type="binding site" evidence="1">
    <location>
        <position position="59"/>
    </location>
    <ligand>
        <name>glutathione</name>
        <dbReference type="ChEBI" id="CHEBI:57925"/>
    </ligand>
</feature>
<feature type="binding site" evidence="1">
    <location>
        <position position="71"/>
    </location>
    <ligand>
        <name>glutathione</name>
        <dbReference type="ChEBI" id="CHEBI:57925"/>
    </ligand>
</feature>
<feature type="binding site" evidence="1">
    <location>
        <begin position="84"/>
        <end position="85"/>
    </location>
    <ligand>
        <name>glutathione</name>
        <dbReference type="ChEBI" id="CHEBI:57925"/>
    </ligand>
</feature>
<accession>P0AC71</accession>
<accession>P37010</accession>
<accession>P77424</accession>
<keyword id="KW-0001">2Fe-2S</keyword>
<keyword id="KW-0963">Cytoplasm</keyword>
<keyword id="KW-0408">Iron</keyword>
<keyword id="KW-0411">Iron-sulfur</keyword>
<keyword id="KW-0479">Metal-binding</keyword>
<keyword id="KW-0676">Redox-active center</keyword>
<keyword id="KW-1185">Reference proteome</keyword>
<reference key="1">
    <citation type="journal article" date="2001" name="Nature">
        <title>Genome sequence of enterohaemorrhagic Escherichia coli O157:H7.</title>
        <authorList>
            <person name="Perna N.T."/>
            <person name="Plunkett G. III"/>
            <person name="Burland V."/>
            <person name="Mau B."/>
            <person name="Glasner J.D."/>
            <person name="Rose D.J."/>
            <person name="Mayhew G.F."/>
            <person name="Evans P.S."/>
            <person name="Gregor J."/>
            <person name="Kirkpatrick H.A."/>
            <person name="Posfai G."/>
            <person name="Hackett J."/>
            <person name="Klink S."/>
            <person name="Boutin A."/>
            <person name="Shao Y."/>
            <person name="Miller L."/>
            <person name="Grotbeck E.J."/>
            <person name="Davis N.W."/>
            <person name="Lim A."/>
            <person name="Dimalanta E.T."/>
            <person name="Potamousis K."/>
            <person name="Apodaca J."/>
            <person name="Anantharaman T.S."/>
            <person name="Lin J."/>
            <person name="Yen G."/>
            <person name="Schwartz D.C."/>
            <person name="Welch R.A."/>
            <person name="Blattner F.R."/>
        </authorList>
    </citation>
    <scope>NUCLEOTIDE SEQUENCE [LARGE SCALE GENOMIC DNA]</scope>
    <source>
        <strain>O157:H7 / EDL933 / ATCC 700927 / EHEC</strain>
    </source>
</reference>
<reference key="2">
    <citation type="journal article" date="2001" name="DNA Res.">
        <title>Complete genome sequence of enterohemorrhagic Escherichia coli O157:H7 and genomic comparison with a laboratory strain K-12.</title>
        <authorList>
            <person name="Hayashi T."/>
            <person name="Makino K."/>
            <person name="Ohnishi M."/>
            <person name="Kurokawa K."/>
            <person name="Ishii K."/>
            <person name="Yokoyama K."/>
            <person name="Han C.-G."/>
            <person name="Ohtsubo E."/>
            <person name="Nakayama K."/>
            <person name="Murata T."/>
            <person name="Tanaka M."/>
            <person name="Tobe T."/>
            <person name="Iida T."/>
            <person name="Takami H."/>
            <person name="Honda T."/>
            <person name="Sasakawa C."/>
            <person name="Ogasawara N."/>
            <person name="Yasunaga T."/>
            <person name="Kuhara S."/>
            <person name="Shiba T."/>
            <person name="Hattori M."/>
            <person name="Shinagawa H."/>
        </authorList>
    </citation>
    <scope>NUCLEOTIDE SEQUENCE [LARGE SCALE GENOMIC DNA]</scope>
    <source>
        <strain>O157:H7 / Sakai / RIMD 0509952 / EHEC</strain>
    </source>
</reference>